<evidence type="ECO:0000255" key="1">
    <source>
        <dbReference type="HAMAP-Rule" id="MF_00483"/>
    </source>
</evidence>
<feature type="chain" id="PRO_1000126039" description="DNA replication terminus site-binding protein">
    <location>
        <begin position="1"/>
        <end position="309"/>
    </location>
</feature>
<protein>
    <recommendedName>
        <fullName evidence="1">DNA replication terminus site-binding protein</fullName>
        <shortName evidence="1">Ter-binding protein</shortName>
    </recommendedName>
</protein>
<dbReference type="EMBL" id="AP009240">
    <property type="protein sequence ID" value="BAG77255.1"/>
    <property type="molecule type" value="Genomic_DNA"/>
</dbReference>
<dbReference type="RefSeq" id="WP_000135186.1">
    <property type="nucleotide sequence ID" value="NC_011415.1"/>
</dbReference>
<dbReference type="SMR" id="B6IB44"/>
<dbReference type="KEGG" id="ecy:ECSE_1731"/>
<dbReference type="HOGENOM" id="CLU_078181_0_0_6"/>
<dbReference type="Proteomes" id="UP000008199">
    <property type="component" value="Chromosome"/>
</dbReference>
<dbReference type="GO" id="GO:0005737">
    <property type="term" value="C:cytoplasm"/>
    <property type="evidence" value="ECO:0007669"/>
    <property type="project" value="UniProtKB-SubCell"/>
</dbReference>
<dbReference type="GO" id="GO:0003677">
    <property type="term" value="F:DNA binding"/>
    <property type="evidence" value="ECO:0007669"/>
    <property type="project" value="UniProtKB-UniRule"/>
</dbReference>
<dbReference type="GO" id="GO:0006274">
    <property type="term" value="P:DNA replication termination"/>
    <property type="evidence" value="ECO:0007669"/>
    <property type="project" value="UniProtKB-UniRule"/>
</dbReference>
<dbReference type="Gene3D" id="3.30.54.10">
    <property type="match status" value="1"/>
</dbReference>
<dbReference type="Gene3D" id="3.50.14.10">
    <property type="entry name" value="Replication terminator Tus, domain 1 superfamily/Replication terminator Tus"/>
    <property type="match status" value="1"/>
</dbReference>
<dbReference type="HAMAP" id="MF_00483">
    <property type="entry name" value="Rep_term_Tus"/>
    <property type="match status" value="1"/>
</dbReference>
<dbReference type="InterPro" id="IPR008865">
    <property type="entry name" value="DNA_replication_term_site-bd"/>
</dbReference>
<dbReference type="InterPro" id="IPR036381">
    <property type="entry name" value="Tus_dom1"/>
</dbReference>
<dbReference type="InterPro" id="IPR036384">
    <property type="entry name" value="Tus_sf"/>
</dbReference>
<dbReference type="NCBIfam" id="TIGR02648">
    <property type="entry name" value="rep_term_tus"/>
    <property type="match status" value="1"/>
</dbReference>
<dbReference type="Pfam" id="PF05472">
    <property type="entry name" value="Ter"/>
    <property type="match status" value="1"/>
</dbReference>
<dbReference type="SUPFAM" id="SSF56596">
    <property type="entry name" value="Replication terminator protein (Tus)"/>
    <property type="match status" value="1"/>
</dbReference>
<accession>B6IB44</accession>
<name>TUS_ECOSE</name>
<proteinExistence type="inferred from homology"/>
<gene>
    <name evidence="1" type="primary">tus</name>
    <name type="ordered locus">ECSE_1731</name>
</gene>
<comment type="function">
    <text evidence="1">Trans-acting protein required for termination of DNA replication. Binds to DNA replication terminator sequences (terA to terF) to prevent the passage of replication forks. The termination efficiency will be affected by the affinity of this protein for the terminator sequence.</text>
</comment>
<comment type="subcellular location">
    <subcellularLocation>
        <location evidence="1">Cytoplasm</location>
    </subcellularLocation>
</comment>
<comment type="similarity">
    <text evidence="1">Belongs to the Tus family.</text>
</comment>
<keyword id="KW-0963">Cytoplasm</keyword>
<keyword id="KW-0235">DNA replication</keyword>
<keyword id="KW-0238">DNA-binding</keyword>
<sequence length="309" mass="35771">MARYDLVDRLNTTFRQMEQELATFAAHLEQHKLLVARVFSLPEVKKEDEHNPLNRIEVKQHLGNDAQSLALRHFRHLFIQQQSENRSSKAAVRLPGVLCYQVDNLSQAALVSHIQHINKLKTTFEHIVTVESELPTAARFEWVHRHLPGLITLNAYRTLTVLHDPATLRFGWANKHIIKNLHRDEVLAQLEKSLKSPRSVAPWTREEWQRKLEREYQDIAALPQNAKLKIKRPVKVQPIARVWYKGDQKQVQHACPTPLIALINRDNGAGVPDVGELLNYDADNVQHRYKPQAQPLRLIIPRLHLYVAD</sequence>
<organism>
    <name type="scientific">Escherichia coli (strain SE11)</name>
    <dbReference type="NCBI Taxonomy" id="409438"/>
    <lineage>
        <taxon>Bacteria</taxon>
        <taxon>Pseudomonadati</taxon>
        <taxon>Pseudomonadota</taxon>
        <taxon>Gammaproteobacteria</taxon>
        <taxon>Enterobacterales</taxon>
        <taxon>Enterobacteriaceae</taxon>
        <taxon>Escherichia</taxon>
    </lineage>
</organism>
<reference key="1">
    <citation type="journal article" date="2008" name="DNA Res.">
        <title>Complete genome sequence and comparative analysis of the wild-type commensal Escherichia coli strain SE11 isolated from a healthy adult.</title>
        <authorList>
            <person name="Oshima K."/>
            <person name="Toh H."/>
            <person name="Ogura Y."/>
            <person name="Sasamoto H."/>
            <person name="Morita H."/>
            <person name="Park S.-H."/>
            <person name="Ooka T."/>
            <person name="Iyoda S."/>
            <person name="Taylor T.D."/>
            <person name="Hayashi T."/>
            <person name="Itoh K."/>
            <person name="Hattori M."/>
        </authorList>
    </citation>
    <scope>NUCLEOTIDE SEQUENCE [LARGE SCALE GENOMIC DNA]</scope>
    <source>
        <strain>SE11</strain>
    </source>
</reference>